<accession>P75295</accession>
<keyword id="KW-0472">Membrane</keyword>
<keyword id="KW-1185">Reference proteome</keyword>
<keyword id="KW-0812">Transmembrane</keyword>
<keyword id="KW-1133">Transmembrane helix</keyword>
<dbReference type="EMBL" id="U00089">
    <property type="protein sequence ID" value="AAB95999.1"/>
    <property type="molecule type" value="Genomic_DNA"/>
</dbReference>
<dbReference type="PIR" id="S73677">
    <property type="entry name" value="S73677"/>
</dbReference>
<dbReference type="RefSeq" id="NP_110179.1">
    <property type="nucleotide sequence ID" value="NC_000912.1"/>
</dbReference>
<dbReference type="RefSeq" id="WP_010874847.1">
    <property type="nucleotide sequence ID" value="NC_000912.1"/>
</dbReference>
<dbReference type="STRING" id="272634.MPN_491"/>
<dbReference type="EnsemblBacteria" id="AAB95999">
    <property type="protein sequence ID" value="AAB95999"/>
    <property type="gene ID" value="MPN_491"/>
</dbReference>
<dbReference type="KEGG" id="mpn:MPN_491"/>
<dbReference type="PATRIC" id="fig|272634.6.peg.531"/>
<dbReference type="HOGENOM" id="CLU_575958_0_0_14"/>
<dbReference type="OrthoDB" id="403989at2"/>
<dbReference type="BioCyc" id="MPNE272634:G1GJ3-806-MONOMER"/>
<dbReference type="Proteomes" id="UP000000808">
    <property type="component" value="Chromosome"/>
</dbReference>
<dbReference type="GO" id="GO:0016020">
    <property type="term" value="C:membrane"/>
    <property type="evidence" value="ECO:0007669"/>
    <property type="project" value="UniProtKB-SubCell"/>
</dbReference>
<dbReference type="Gene3D" id="3.60.10.10">
    <property type="entry name" value="Endonuclease/exonuclease/phosphatase"/>
    <property type="match status" value="2"/>
</dbReference>
<dbReference type="InterPro" id="IPR036691">
    <property type="entry name" value="Endo/exonu/phosph_ase_sf"/>
</dbReference>
<dbReference type="PANTHER" id="PTHR11371">
    <property type="entry name" value="DEOXYRIBONUCLEASE"/>
    <property type="match status" value="1"/>
</dbReference>
<dbReference type="PANTHER" id="PTHR11371:SF31">
    <property type="entry name" value="EXTRACELLULAR NUCLEASE"/>
    <property type="match status" value="1"/>
</dbReference>
<dbReference type="SUPFAM" id="SSF56219">
    <property type="entry name" value="DNase I-like"/>
    <property type="match status" value="1"/>
</dbReference>
<gene>
    <name type="ordered locus">MPN_491</name>
    <name type="ORF">MP351</name>
    <name type="ORF">P02_orf474</name>
</gene>
<organism>
    <name type="scientific">Mycoplasma pneumoniae (strain ATCC 29342 / M129 / Subtype 1)</name>
    <name type="common">Mycoplasmoides pneumoniae</name>
    <dbReference type="NCBI Taxonomy" id="272634"/>
    <lineage>
        <taxon>Bacteria</taxon>
        <taxon>Bacillati</taxon>
        <taxon>Mycoplasmatota</taxon>
        <taxon>Mycoplasmoidales</taxon>
        <taxon>Mycoplasmoidaceae</taxon>
        <taxon>Mycoplasmoides</taxon>
    </lineage>
</organism>
<feature type="chain" id="PRO_0000210687" description="Uncharacterized protein MPN_491">
    <location>
        <begin position="1"/>
        <end position="474"/>
    </location>
</feature>
<feature type="transmembrane region" description="Helical" evidence="1">
    <location>
        <begin position="3"/>
        <end position="23"/>
    </location>
</feature>
<feature type="region of interest" description="Disordered" evidence="2">
    <location>
        <begin position="171"/>
        <end position="296"/>
    </location>
</feature>
<feature type="compositionally biased region" description="Basic residues" evidence="2">
    <location>
        <begin position="180"/>
        <end position="210"/>
    </location>
</feature>
<feature type="compositionally biased region" description="Polar residues" evidence="2">
    <location>
        <begin position="231"/>
        <end position="253"/>
    </location>
</feature>
<feature type="compositionally biased region" description="Acidic residues" evidence="2">
    <location>
        <begin position="257"/>
        <end position="266"/>
    </location>
</feature>
<feature type="compositionally biased region" description="Low complexity" evidence="2">
    <location>
        <begin position="267"/>
        <end position="281"/>
    </location>
</feature>
<feature type="compositionally biased region" description="Basic and acidic residues" evidence="2">
    <location>
        <begin position="282"/>
        <end position="296"/>
    </location>
</feature>
<comment type="subcellular location">
    <subcellularLocation>
        <location evidence="3">Membrane</location>
        <topology evidence="3">Single-pass membrane protein</topology>
    </subcellularLocation>
</comment>
<reference key="1">
    <citation type="journal article" date="1996" name="Nucleic Acids Res.">
        <title>Complete sequence analysis of the genome of the bacterium Mycoplasma pneumoniae.</title>
        <authorList>
            <person name="Himmelreich R."/>
            <person name="Hilbert H."/>
            <person name="Plagens H."/>
            <person name="Pirkl E."/>
            <person name="Li B.-C."/>
            <person name="Herrmann R."/>
        </authorList>
    </citation>
    <scope>NUCLEOTIDE SEQUENCE [LARGE SCALE GENOMIC DNA]</scope>
    <source>
        <strain>ATCC 29342 / M129 / Subtype 1</strain>
    </source>
</reference>
<protein>
    <recommendedName>
        <fullName>Uncharacterized protein MPN_491</fullName>
    </recommendedName>
</protein>
<name>Y491_MYCPN</name>
<sequence length="474" mass="52974">MKLTLWLVLGAVGVGAVGTGVGFGTKYFLDHKAKSNVDVAFKQRSLRKQVNVGFWNALNFLGSERSFGNQNSKVKTKGIAEIINLLKYDIVGLAEIQPSTESTAERFVDQLNEYADPYTSWSYDLSPVTTSKTASEGQKERILIVYNSQSVKMEGQGWFYDNPEMDISNYVSDGSSSKTRTPKKTKTSKKKPIKKKSSKSKSSKGSKKQKTTNESESETLELKLEQRRVTTRSQSKQQKGQEQATDQTDSEGVTTEEGADNTDTELVETTAETTEQEATTKSTKDTKETKDRTKVDWSRPPYSAEFSTQKGKVVVAFGHFDSPGANTKRGEKIAKMGKGQGAHEYFEAQTTFKAMDSIKQHFNNENILFMADTNIKFGNQAAAFGESKDYTFLTEDNEAWKSSLGTKSGYANPYDKIITSNSFKNKVLDQAETYWNYFDRYLKTKGHNSYLFDLASWGTKPRTISDHAPVGVLF</sequence>
<evidence type="ECO:0000255" key="1"/>
<evidence type="ECO:0000256" key="2">
    <source>
        <dbReference type="SAM" id="MobiDB-lite"/>
    </source>
</evidence>
<evidence type="ECO:0000305" key="3"/>
<proteinExistence type="predicted"/>